<accession>Q5BKK4</accession>
<keyword id="KW-0053">Apoptosis</keyword>
<keyword id="KW-0067">ATP-binding</keyword>
<keyword id="KW-0963">Cytoplasm</keyword>
<keyword id="KW-0256">Endoplasmic reticulum</keyword>
<keyword id="KW-0418">Kinase</keyword>
<keyword id="KW-0547">Nucleotide-binding</keyword>
<keyword id="KW-0539">Nucleus</keyword>
<keyword id="KW-0597">Phosphoprotein</keyword>
<keyword id="KW-1185">Reference proteome</keyword>
<keyword id="KW-0723">Serine/threonine-protein kinase</keyword>
<keyword id="KW-0346">Stress response</keyword>
<keyword id="KW-0808">Transferase</keyword>
<name>SGK1_XENTR</name>
<proteinExistence type="evidence at transcript level"/>
<dbReference type="EC" id="2.7.11.1"/>
<dbReference type="EMBL" id="BC091042">
    <property type="protein sequence ID" value="AAH91042.1"/>
    <property type="molecule type" value="mRNA"/>
</dbReference>
<dbReference type="RefSeq" id="NP_001025593.1">
    <property type="nucleotide sequence ID" value="NM_001030422.1"/>
</dbReference>
<dbReference type="SMR" id="Q5BKK4"/>
<dbReference type="FunCoup" id="Q5BKK4">
    <property type="interactions" value="2230"/>
</dbReference>
<dbReference type="STRING" id="8364.ENSXETP00000014708"/>
<dbReference type="PaxDb" id="8364-ENSXETP00000000246"/>
<dbReference type="GeneID" id="594981"/>
<dbReference type="KEGG" id="xtr:594981"/>
<dbReference type="AGR" id="Xenbase:XB-GENE-1003518"/>
<dbReference type="CTD" id="6446"/>
<dbReference type="Xenbase" id="XB-GENE-1003518">
    <property type="gene designation" value="sgk1"/>
</dbReference>
<dbReference type="eggNOG" id="KOG0598">
    <property type="taxonomic scope" value="Eukaryota"/>
</dbReference>
<dbReference type="HOGENOM" id="CLU_000288_63_5_1"/>
<dbReference type="InParanoid" id="Q5BKK4"/>
<dbReference type="OrthoDB" id="63267at2759"/>
<dbReference type="Proteomes" id="UP000008143">
    <property type="component" value="Chromosome 5"/>
</dbReference>
<dbReference type="Bgee" id="ENSXETG00000000124">
    <property type="expression patterns" value="Expressed in mesonephros and 21 other cell types or tissues"/>
</dbReference>
<dbReference type="ExpressionAtlas" id="Q5BKK4">
    <property type="expression patterns" value="baseline and differential"/>
</dbReference>
<dbReference type="GO" id="GO:0005783">
    <property type="term" value="C:endoplasmic reticulum"/>
    <property type="evidence" value="ECO:0007669"/>
    <property type="project" value="UniProtKB-SubCell"/>
</dbReference>
<dbReference type="GO" id="GO:0005634">
    <property type="term" value="C:nucleus"/>
    <property type="evidence" value="ECO:0007669"/>
    <property type="project" value="UniProtKB-SubCell"/>
</dbReference>
<dbReference type="GO" id="GO:0005524">
    <property type="term" value="F:ATP binding"/>
    <property type="evidence" value="ECO:0007669"/>
    <property type="project" value="UniProtKB-KW"/>
</dbReference>
<dbReference type="GO" id="GO:0106310">
    <property type="term" value="F:protein serine kinase activity"/>
    <property type="evidence" value="ECO:0007669"/>
    <property type="project" value="RHEA"/>
</dbReference>
<dbReference type="GO" id="GO:0004674">
    <property type="term" value="F:protein serine/threonine kinase activity"/>
    <property type="evidence" value="ECO:0007669"/>
    <property type="project" value="UniProtKB-KW"/>
</dbReference>
<dbReference type="GO" id="GO:0006915">
    <property type="term" value="P:apoptotic process"/>
    <property type="evidence" value="ECO:0007669"/>
    <property type="project" value="UniProtKB-KW"/>
</dbReference>
<dbReference type="CDD" id="cd05602">
    <property type="entry name" value="STKc_SGK1"/>
    <property type="match status" value="1"/>
</dbReference>
<dbReference type="FunFam" id="1.10.510.10:FF:000065">
    <property type="entry name" value="Non-specific serine/threonine protein kinase"/>
    <property type="match status" value="1"/>
</dbReference>
<dbReference type="FunFam" id="3.30.200.20:FF:000030">
    <property type="entry name" value="Non-specific serine/threonine protein kinase"/>
    <property type="match status" value="1"/>
</dbReference>
<dbReference type="Gene3D" id="3.30.200.20">
    <property type="entry name" value="Phosphorylase Kinase, domain 1"/>
    <property type="match status" value="1"/>
</dbReference>
<dbReference type="Gene3D" id="1.10.510.10">
    <property type="entry name" value="Transferase(Phosphotransferase) domain 1"/>
    <property type="match status" value="1"/>
</dbReference>
<dbReference type="InterPro" id="IPR000961">
    <property type="entry name" value="AGC-kinase_C"/>
</dbReference>
<dbReference type="InterPro" id="IPR011009">
    <property type="entry name" value="Kinase-like_dom_sf"/>
</dbReference>
<dbReference type="InterPro" id="IPR017892">
    <property type="entry name" value="Pkinase_C"/>
</dbReference>
<dbReference type="InterPro" id="IPR000719">
    <property type="entry name" value="Prot_kinase_dom"/>
</dbReference>
<dbReference type="InterPro" id="IPR017441">
    <property type="entry name" value="Protein_kinase_ATP_BS"/>
</dbReference>
<dbReference type="InterPro" id="IPR008271">
    <property type="entry name" value="Ser/Thr_kinase_AS"/>
</dbReference>
<dbReference type="PANTHER" id="PTHR24351">
    <property type="entry name" value="RIBOSOMAL PROTEIN S6 KINASE"/>
    <property type="match status" value="1"/>
</dbReference>
<dbReference type="Pfam" id="PF00069">
    <property type="entry name" value="Pkinase"/>
    <property type="match status" value="1"/>
</dbReference>
<dbReference type="Pfam" id="PF00433">
    <property type="entry name" value="Pkinase_C"/>
    <property type="match status" value="1"/>
</dbReference>
<dbReference type="SMART" id="SM00133">
    <property type="entry name" value="S_TK_X"/>
    <property type="match status" value="1"/>
</dbReference>
<dbReference type="SMART" id="SM00220">
    <property type="entry name" value="S_TKc"/>
    <property type="match status" value="1"/>
</dbReference>
<dbReference type="SUPFAM" id="SSF56112">
    <property type="entry name" value="Protein kinase-like (PK-like)"/>
    <property type="match status" value="1"/>
</dbReference>
<dbReference type="PROSITE" id="PS51285">
    <property type="entry name" value="AGC_KINASE_CTER"/>
    <property type="match status" value="1"/>
</dbReference>
<dbReference type="PROSITE" id="PS00107">
    <property type="entry name" value="PROTEIN_KINASE_ATP"/>
    <property type="match status" value="1"/>
</dbReference>
<dbReference type="PROSITE" id="PS50011">
    <property type="entry name" value="PROTEIN_KINASE_DOM"/>
    <property type="match status" value="1"/>
</dbReference>
<dbReference type="PROSITE" id="PS00108">
    <property type="entry name" value="PROTEIN_KINASE_ST"/>
    <property type="match status" value="1"/>
</dbReference>
<gene>
    <name type="primary">sgk1</name>
    <name type="synonym">sgk</name>
</gene>
<comment type="function">
    <text evidence="1">Protein kinase that may play an important role in cellular stress response (By similarity). Plays an important role in activating certain potassium, sodium, and chloride channels, suggesting an involvement in the regulation of processes such as cell survival, neuronal excitability, and renal sodium excretion.</text>
</comment>
<comment type="catalytic activity">
    <reaction>
        <text>L-seryl-[protein] + ATP = O-phospho-L-seryl-[protein] + ADP + H(+)</text>
        <dbReference type="Rhea" id="RHEA:17989"/>
        <dbReference type="Rhea" id="RHEA-COMP:9863"/>
        <dbReference type="Rhea" id="RHEA-COMP:11604"/>
        <dbReference type="ChEBI" id="CHEBI:15378"/>
        <dbReference type="ChEBI" id="CHEBI:29999"/>
        <dbReference type="ChEBI" id="CHEBI:30616"/>
        <dbReference type="ChEBI" id="CHEBI:83421"/>
        <dbReference type="ChEBI" id="CHEBI:456216"/>
        <dbReference type="EC" id="2.7.11.1"/>
    </reaction>
</comment>
<comment type="catalytic activity">
    <reaction>
        <text>L-threonyl-[protein] + ATP = O-phospho-L-threonyl-[protein] + ADP + H(+)</text>
        <dbReference type="Rhea" id="RHEA:46608"/>
        <dbReference type="Rhea" id="RHEA-COMP:11060"/>
        <dbReference type="Rhea" id="RHEA-COMP:11605"/>
        <dbReference type="ChEBI" id="CHEBI:15378"/>
        <dbReference type="ChEBI" id="CHEBI:30013"/>
        <dbReference type="ChEBI" id="CHEBI:30616"/>
        <dbReference type="ChEBI" id="CHEBI:61977"/>
        <dbReference type="ChEBI" id="CHEBI:456216"/>
        <dbReference type="EC" id="2.7.11.1"/>
    </reaction>
</comment>
<comment type="subcellular location">
    <subcellularLocation>
        <location evidence="1">Cytoplasm</location>
    </subcellularLocation>
    <subcellularLocation>
        <location evidence="1">Nucleus</location>
    </subcellularLocation>
    <subcellularLocation>
        <location evidence="1">Endoplasmic reticulum</location>
    </subcellularLocation>
</comment>
<comment type="similarity">
    <text evidence="6">Belongs to the protein kinase superfamily. AGC Ser/Thr protein kinase family.</text>
</comment>
<organism>
    <name type="scientific">Xenopus tropicalis</name>
    <name type="common">Western clawed frog</name>
    <name type="synonym">Silurana tropicalis</name>
    <dbReference type="NCBI Taxonomy" id="8364"/>
    <lineage>
        <taxon>Eukaryota</taxon>
        <taxon>Metazoa</taxon>
        <taxon>Chordata</taxon>
        <taxon>Craniata</taxon>
        <taxon>Vertebrata</taxon>
        <taxon>Euteleostomi</taxon>
        <taxon>Amphibia</taxon>
        <taxon>Batrachia</taxon>
        <taxon>Anura</taxon>
        <taxon>Pipoidea</taxon>
        <taxon>Pipidae</taxon>
        <taxon>Xenopodinae</taxon>
        <taxon>Xenopus</taxon>
        <taxon>Silurana</taxon>
    </lineage>
</organism>
<sequence length="418" mass="47659">MRTKNEKSPLKAFMKQRRMGLNDFIQKIATNSSYACKHSEVQSILNISPPQEPELLNENSSPPPSPSQQINLGPSSNPHAKPSDFQFLKIIGKGSFGKVLLARHNADEKFYAVKVLQKKAILKKKEEKHIMSERNVLLKNVKHPFLVGLHFSFQTTSRLYFILDYINGGELFYHLQRERCFLEPRARFYAAEIASALGYLHSLNIVYRDLKPENILLDSQGHIILTDFGLCKENIEPNGTTSTFCGTPEYLAPEVLHKQPYDRTVDWWCLGAVLYEMLYGLPPFYSRNTAEMYDNILNKPLQLKPNITNSARNLLEGLLQKDRTKRIGAKNDFMEIKNHMFFSPINWDDLINKKITPPFNPNVSGPSDLQHFDPEFTEEPVPNSIGQSPDSILITASIKEAAEAFMGFSYAPPMESYL</sequence>
<protein>
    <recommendedName>
        <fullName>Serine/threonine-protein kinase Sgk1</fullName>
        <ecNumber>2.7.11.1</ecNumber>
    </recommendedName>
    <alternativeName>
        <fullName>Serum/glucocorticoid-regulated kinase 1</fullName>
    </alternativeName>
</protein>
<reference key="1">
    <citation type="submission" date="2005-03" db="EMBL/GenBank/DDBJ databases">
        <authorList>
            <consortium name="NIH - Xenopus Gene Collection (XGC) project"/>
        </authorList>
    </citation>
    <scope>NUCLEOTIDE SEQUENCE [LARGE SCALE MRNA]</scope>
</reference>
<feature type="chain" id="PRO_0000380135" description="Serine/threonine-protein kinase Sgk1">
    <location>
        <begin position="1"/>
        <end position="418"/>
    </location>
</feature>
<feature type="domain" description="Protein kinase" evidence="2">
    <location>
        <begin position="85"/>
        <end position="342"/>
    </location>
</feature>
<feature type="domain" description="AGC-kinase C-terminal" evidence="3">
    <location>
        <begin position="343"/>
        <end position="418"/>
    </location>
</feature>
<feature type="region of interest" description="Disordered" evidence="5">
    <location>
        <begin position="50"/>
        <end position="78"/>
    </location>
</feature>
<feature type="compositionally biased region" description="Polar residues" evidence="5">
    <location>
        <begin position="68"/>
        <end position="78"/>
    </location>
</feature>
<feature type="active site" description="Proton acceptor" evidence="2 4">
    <location>
        <position position="209"/>
    </location>
</feature>
<feature type="binding site" evidence="2">
    <location>
        <begin position="91"/>
        <end position="99"/>
    </location>
    <ligand>
        <name>ATP</name>
        <dbReference type="ChEBI" id="CHEBI:30616"/>
    </ligand>
</feature>
<feature type="binding site" evidence="2">
    <location>
        <position position="114"/>
    </location>
    <ligand>
        <name>ATP</name>
        <dbReference type="ChEBI" id="CHEBI:30616"/>
    </ligand>
</feature>
<evidence type="ECO:0000250" key="1"/>
<evidence type="ECO:0000255" key="2">
    <source>
        <dbReference type="PROSITE-ProRule" id="PRU00159"/>
    </source>
</evidence>
<evidence type="ECO:0000255" key="3">
    <source>
        <dbReference type="PROSITE-ProRule" id="PRU00618"/>
    </source>
</evidence>
<evidence type="ECO:0000255" key="4">
    <source>
        <dbReference type="PROSITE-ProRule" id="PRU10027"/>
    </source>
</evidence>
<evidence type="ECO:0000256" key="5">
    <source>
        <dbReference type="SAM" id="MobiDB-lite"/>
    </source>
</evidence>
<evidence type="ECO:0000305" key="6"/>